<proteinExistence type="inferred from homology"/>
<reference key="1">
    <citation type="submission" date="2006-08" db="EMBL/GenBank/DDBJ databases">
        <title>Complete sequence of Shewanella sp. MR-4.</title>
        <authorList>
            <consortium name="US DOE Joint Genome Institute"/>
            <person name="Copeland A."/>
            <person name="Lucas S."/>
            <person name="Lapidus A."/>
            <person name="Barry K."/>
            <person name="Detter J.C."/>
            <person name="Glavina del Rio T."/>
            <person name="Hammon N."/>
            <person name="Israni S."/>
            <person name="Dalin E."/>
            <person name="Tice H."/>
            <person name="Pitluck S."/>
            <person name="Kiss H."/>
            <person name="Brettin T."/>
            <person name="Bruce D."/>
            <person name="Han C."/>
            <person name="Tapia R."/>
            <person name="Gilna P."/>
            <person name="Schmutz J."/>
            <person name="Larimer F."/>
            <person name="Land M."/>
            <person name="Hauser L."/>
            <person name="Kyrpides N."/>
            <person name="Mikhailova N."/>
            <person name="Nealson K."/>
            <person name="Konstantinidis K."/>
            <person name="Klappenbach J."/>
            <person name="Tiedje J."/>
            <person name="Richardson P."/>
        </authorList>
    </citation>
    <scope>NUCLEOTIDE SEQUENCE [LARGE SCALE GENOMIC DNA]</scope>
    <source>
        <strain>MR-4</strain>
    </source>
</reference>
<protein>
    <recommendedName>
        <fullName evidence="1">Holliday junction branch migration complex subunit RuvA</fullName>
    </recommendedName>
</protein>
<accession>Q0HIZ2</accession>
<dbReference type="EMBL" id="CP000446">
    <property type="protein sequence ID" value="ABI38975.1"/>
    <property type="molecule type" value="Genomic_DNA"/>
</dbReference>
<dbReference type="RefSeq" id="WP_011622672.1">
    <property type="nucleotide sequence ID" value="NC_008321.1"/>
</dbReference>
<dbReference type="SMR" id="Q0HIZ2"/>
<dbReference type="KEGG" id="she:Shewmr4_1901"/>
<dbReference type="HOGENOM" id="CLU_087936_0_0_6"/>
<dbReference type="GO" id="GO:0005737">
    <property type="term" value="C:cytoplasm"/>
    <property type="evidence" value="ECO:0007669"/>
    <property type="project" value="UniProtKB-SubCell"/>
</dbReference>
<dbReference type="GO" id="GO:0009379">
    <property type="term" value="C:Holliday junction helicase complex"/>
    <property type="evidence" value="ECO:0007669"/>
    <property type="project" value="InterPro"/>
</dbReference>
<dbReference type="GO" id="GO:0048476">
    <property type="term" value="C:Holliday junction resolvase complex"/>
    <property type="evidence" value="ECO:0007669"/>
    <property type="project" value="UniProtKB-UniRule"/>
</dbReference>
<dbReference type="GO" id="GO:0005524">
    <property type="term" value="F:ATP binding"/>
    <property type="evidence" value="ECO:0007669"/>
    <property type="project" value="InterPro"/>
</dbReference>
<dbReference type="GO" id="GO:0000400">
    <property type="term" value="F:four-way junction DNA binding"/>
    <property type="evidence" value="ECO:0007669"/>
    <property type="project" value="UniProtKB-UniRule"/>
</dbReference>
<dbReference type="GO" id="GO:0009378">
    <property type="term" value="F:four-way junction helicase activity"/>
    <property type="evidence" value="ECO:0007669"/>
    <property type="project" value="InterPro"/>
</dbReference>
<dbReference type="GO" id="GO:0006310">
    <property type="term" value="P:DNA recombination"/>
    <property type="evidence" value="ECO:0007669"/>
    <property type="project" value="UniProtKB-UniRule"/>
</dbReference>
<dbReference type="GO" id="GO:0006281">
    <property type="term" value="P:DNA repair"/>
    <property type="evidence" value="ECO:0007669"/>
    <property type="project" value="UniProtKB-UniRule"/>
</dbReference>
<dbReference type="CDD" id="cd14332">
    <property type="entry name" value="UBA_RuvA_C"/>
    <property type="match status" value="1"/>
</dbReference>
<dbReference type="Gene3D" id="1.10.150.20">
    <property type="entry name" value="5' to 3' exonuclease, C-terminal subdomain"/>
    <property type="match status" value="1"/>
</dbReference>
<dbReference type="Gene3D" id="1.10.8.10">
    <property type="entry name" value="DNA helicase RuvA subunit, C-terminal domain"/>
    <property type="match status" value="1"/>
</dbReference>
<dbReference type="Gene3D" id="2.40.50.140">
    <property type="entry name" value="Nucleic acid-binding proteins"/>
    <property type="match status" value="1"/>
</dbReference>
<dbReference type="HAMAP" id="MF_00031">
    <property type="entry name" value="DNA_HJ_migration_RuvA"/>
    <property type="match status" value="1"/>
</dbReference>
<dbReference type="InterPro" id="IPR013849">
    <property type="entry name" value="DNA_helicase_Holl-junc_RuvA_I"/>
</dbReference>
<dbReference type="InterPro" id="IPR003583">
    <property type="entry name" value="Hlx-hairpin-Hlx_DNA-bd_motif"/>
</dbReference>
<dbReference type="InterPro" id="IPR012340">
    <property type="entry name" value="NA-bd_OB-fold"/>
</dbReference>
<dbReference type="InterPro" id="IPR000085">
    <property type="entry name" value="RuvA"/>
</dbReference>
<dbReference type="InterPro" id="IPR010994">
    <property type="entry name" value="RuvA_2-like"/>
</dbReference>
<dbReference type="InterPro" id="IPR011114">
    <property type="entry name" value="RuvA_C"/>
</dbReference>
<dbReference type="InterPro" id="IPR036267">
    <property type="entry name" value="RuvA_C_sf"/>
</dbReference>
<dbReference type="NCBIfam" id="TIGR00084">
    <property type="entry name" value="ruvA"/>
    <property type="match status" value="1"/>
</dbReference>
<dbReference type="Pfam" id="PF14520">
    <property type="entry name" value="HHH_5"/>
    <property type="match status" value="1"/>
</dbReference>
<dbReference type="Pfam" id="PF07499">
    <property type="entry name" value="RuvA_C"/>
    <property type="match status" value="1"/>
</dbReference>
<dbReference type="Pfam" id="PF01330">
    <property type="entry name" value="RuvA_N"/>
    <property type="match status" value="1"/>
</dbReference>
<dbReference type="SMART" id="SM00278">
    <property type="entry name" value="HhH1"/>
    <property type="match status" value="2"/>
</dbReference>
<dbReference type="SUPFAM" id="SSF46929">
    <property type="entry name" value="DNA helicase RuvA subunit, C-terminal domain"/>
    <property type="match status" value="1"/>
</dbReference>
<dbReference type="SUPFAM" id="SSF50249">
    <property type="entry name" value="Nucleic acid-binding proteins"/>
    <property type="match status" value="1"/>
</dbReference>
<dbReference type="SUPFAM" id="SSF47781">
    <property type="entry name" value="RuvA domain 2-like"/>
    <property type="match status" value="1"/>
</dbReference>
<name>RUVA_SHESM</name>
<keyword id="KW-0963">Cytoplasm</keyword>
<keyword id="KW-0227">DNA damage</keyword>
<keyword id="KW-0233">DNA recombination</keyword>
<keyword id="KW-0234">DNA repair</keyword>
<keyword id="KW-0238">DNA-binding</keyword>
<gene>
    <name evidence="1" type="primary">ruvA</name>
    <name type="ordered locus">Shewmr4_1901</name>
</gene>
<evidence type="ECO:0000255" key="1">
    <source>
        <dbReference type="HAMAP-Rule" id="MF_00031"/>
    </source>
</evidence>
<feature type="chain" id="PRO_1000002553" description="Holliday junction branch migration complex subunit RuvA">
    <location>
        <begin position="1"/>
        <end position="205"/>
    </location>
</feature>
<feature type="region of interest" description="Domain I" evidence="1">
    <location>
        <begin position="1"/>
        <end position="64"/>
    </location>
</feature>
<feature type="region of interest" description="Domain II" evidence="1">
    <location>
        <begin position="65"/>
        <end position="143"/>
    </location>
</feature>
<feature type="region of interest" description="Flexible linker" evidence="1">
    <location>
        <begin position="144"/>
        <end position="156"/>
    </location>
</feature>
<feature type="region of interest" description="Domain III" evidence="1">
    <location>
        <begin position="157"/>
        <end position="205"/>
    </location>
</feature>
<comment type="function">
    <text evidence="1">The RuvA-RuvB-RuvC complex processes Holliday junction (HJ) DNA during genetic recombination and DNA repair, while the RuvA-RuvB complex plays an important role in the rescue of blocked DNA replication forks via replication fork reversal (RFR). RuvA specifically binds to HJ cruciform DNA, conferring on it an open structure. The RuvB hexamer acts as an ATP-dependent pump, pulling dsDNA into and through the RuvAB complex. HJ branch migration allows RuvC to scan DNA until it finds its consensus sequence, where it cleaves and resolves the cruciform DNA.</text>
</comment>
<comment type="subunit">
    <text evidence="1">Homotetramer. Forms an RuvA(8)-RuvB(12)-Holliday junction (HJ) complex. HJ DNA is sandwiched between 2 RuvA tetramers; dsDNA enters through RuvA and exits via RuvB. An RuvB hexamer assembles on each DNA strand where it exits the tetramer. Each RuvB hexamer is contacted by two RuvA subunits (via domain III) on 2 adjacent RuvB subunits; this complex drives branch migration. In the full resolvosome a probable DNA-RuvA(4)-RuvB(12)-RuvC(2) complex forms which resolves the HJ.</text>
</comment>
<comment type="subcellular location">
    <subcellularLocation>
        <location evidence="1">Cytoplasm</location>
    </subcellularLocation>
</comment>
<comment type="domain">
    <text evidence="1">Has three domains with a flexible linker between the domains II and III and assumes an 'L' shape. Domain III is highly mobile and contacts RuvB.</text>
</comment>
<comment type="similarity">
    <text evidence="1">Belongs to the RuvA family.</text>
</comment>
<organism>
    <name type="scientific">Shewanella sp. (strain MR-4)</name>
    <dbReference type="NCBI Taxonomy" id="60480"/>
    <lineage>
        <taxon>Bacteria</taxon>
        <taxon>Pseudomonadati</taxon>
        <taxon>Pseudomonadota</taxon>
        <taxon>Gammaproteobacteria</taxon>
        <taxon>Alteromonadales</taxon>
        <taxon>Shewanellaceae</taxon>
        <taxon>Shewanella</taxon>
    </lineage>
</organism>
<sequence length="205" mass="22440">MIGRLRGVLIEKQAPEVLIDVNGVGYELQMPLTSFYELPEVNQPTTVYTHFVVREDAQLLYGFITKKERSLFRLLIKANGVGPKLALTILSGMTASEFVGCVERDDIVTLVKLPGVGKKTAERLLVEMRDKLKSLMEASVGSEREFVLQSNYSPAPTVNSAEEDAISALLSLGYKPPQASKAVSAAYKEGMDSETLIKAALKSML</sequence>